<reference key="1">
    <citation type="submission" date="2009-01" db="EMBL/GenBank/DDBJ databases">
        <title>Complete sequence of Diaphorobacter sp. TPSY.</title>
        <authorList>
            <consortium name="US DOE Joint Genome Institute"/>
            <person name="Lucas S."/>
            <person name="Copeland A."/>
            <person name="Lapidus A."/>
            <person name="Glavina del Rio T."/>
            <person name="Tice H."/>
            <person name="Bruce D."/>
            <person name="Goodwin L."/>
            <person name="Pitluck S."/>
            <person name="Chertkov O."/>
            <person name="Brettin T."/>
            <person name="Detter J.C."/>
            <person name="Han C."/>
            <person name="Larimer F."/>
            <person name="Land M."/>
            <person name="Hauser L."/>
            <person name="Kyrpides N."/>
            <person name="Mikhailova N."/>
            <person name="Coates J.D."/>
        </authorList>
    </citation>
    <scope>NUCLEOTIDE SEQUENCE [LARGE SCALE GENOMIC DNA]</scope>
    <source>
        <strain>TPSY</strain>
    </source>
</reference>
<keyword id="KW-0963">Cytoplasm</keyword>
<keyword id="KW-0378">Hydrolase</keyword>
<keyword id="KW-0520">NAD</keyword>
<keyword id="KW-0554">One-carbon metabolism</keyword>
<keyword id="KW-1185">Reference proteome</keyword>
<feature type="chain" id="PRO_1000212054" description="Adenosylhomocysteinase">
    <location>
        <begin position="1"/>
        <end position="476"/>
    </location>
</feature>
<feature type="binding site" evidence="1">
    <location>
        <position position="61"/>
    </location>
    <ligand>
        <name>substrate</name>
    </ligand>
</feature>
<feature type="binding site" evidence="1">
    <location>
        <position position="140"/>
    </location>
    <ligand>
        <name>substrate</name>
    </ligand>
</feature>
<feature type="binding site" evidence="1">
    <location>
        <position position="200"/>
    </location>
    <ligand>
        <name>substrate</name>
    </ligand>
</feature>
<feature type="binding site" evidence="1">
    <location>
        <begin position="201"/>
        <end position="203"/>
    </location>
    <ligand>
        <name>NAD(+)</name>
        <dbReference type="ChEBI" id="CHEBI:57540"/>
    </ligand>
</feature>
<feature type="binding site" evidence="1">
    <location>
        <position position="230"/>
    </location>
    <ligand>
        <name>substrate</name>
    </ligand>
</feature>
<feature type="binding site" evidence="1">
    <location>
        <position position="234"/>
    </location>
    <ligand>
        <name>substrate</name>
    </ligand>
</feature>
<feature type="binding site" evidence="1">
    <location>
        <position position="235"/>
    </location>
    <ligand>
        <name>NAD(+)</name>
        <dbReference type="ChEBI" id="CHEBI:57540"/>
    </ligand>
</feature>
<feature type="binding site" evidence="1">
    <location>
        <begin position="264"/>
        <end position="269"/>
    </location>
    <ligand>
        <name>NAD(+)</name>
        <dbReference type="ChEBI" id="CHEBI:57540"/>
    </ligand>
</feature>
<feature type="binding site" evidence="1">
    <location>
        <position position="287"/>
    </location>
    <ligand>
        <name>NAD(+)</name>
        <dbReference type="ChEBI" id="CHEBI:57540"/>
    </ligand>
</feature>
<feature type="binding site" evidence="1">
    <location>
        <position position="322"/>
    </location>
    <ligand>
        <name>NAD(+)</name>
        <dbReference type="ChEBI" id="CHEBI:57540"/>
    </ligand>
</feature>
<feature type="binding site" evidence="1">
    <location>
        <begin position="343"/>
        <end position="345"/>
    </location>
    <ligand>
        <name>NAD(+)</name>
        <dbReference type="ChEBI" id="CHEBI:57540"/>
    </ligand>
</feature>
<feature type="binding site" evidence="1">
    <location>
        <position position="389"/>
    </location>
    <ligand>
        <name>NAD(+)</name>
        <dbReference type="ChEBI" id="CHEBI:57540"/>
    </ligand>
</feature>
<name>SAHH_ACIET</name>
<evidence type="ECO:0000255" key="1">
    <source>
        <dbReference type="HAMAP-Rule" id="MF_00563"/>
    </source>
</evidence>
<protein>
    <recommendedName>
        <fullName evidence="1">Adenosylhomocysteinase</fullName>
        <ecNumber evidence="1">3.13.2.1</ecNumber>
    </recommendedName>
    <alternativeName>
        <fullName evidence="1">S-adenosyl-L-homocysteine hydrolase</fullName>
        <shortName evidence="1">AdoHcyase</shortName>
    </alternativeName>
</protein>
<proteinExistence type="inferred from homology"/>
<accession>B9MD45</accession>
<comment type="function">
    <text evidence="1">May play a key role in the regulation of the intracellular concentration of adenosylhomocysteine.</text>
</comment>
<comment type="catalytic activity">
    <reaction evidence="1">
        <text>S-adenosyl-L-homocysteine + H2O = L-homocysteine + adenosine</text>
        <dbReference type="Rhea" id="RHEA:21708"/>
        <dbReference type="ChEBI" id="CHEBI:15377"/>
        <dbReference type="ChEBI" id="CHEBI:16335"/>
        <dbReference type="ChEBI" id="CHEBI:57856"/>
        <dbReference type="ChEBI" id="CHEBI:58199"/>
        <dbReference type="EC" id="3.13.2.1"/>
    </reaction>
</comment>
<comment type="cofactor">
    <cofactor evidence="1">
        <name>NAD(+)</name>
        <dbReference type="ChEBI" id="CHEBI:57540"/>
    </cofactor>
    <text evidence="1">Binds 1 NAD(+) per subunit.</text>
</comment>
<comment type="pathway">
    <text evidence="1">Amino-acid biosynthesis; L-homocysteine biosynthesis; L-homocysteine from S-adenosyl-L-homocysteine: step 1/1.</text>
</comment>
<comment type="subcellular location">
    <subcellularLocation>
        <location evidence="1">Cytoplasm</location>
    </subcellularLocation>
</comment>
<comment type="similarity">
    <text evidence="1">Belongs to the adenosylhomocysteinase family.</text>
</comment>
<sequence>MSAVLKSPADSAIADISLAEWGRKEIRIAETEMPGLMAIREEFAAKQPLKGARITGSLHMTIQTAVLIETLKALGADVRWASCNIFSTQDHAAAAIAATGTPVFAIKGETLVDYWDYTHRIFDFGPKGSEGEGPNMILDDGGDATLLMHLGKRAEKDASVLANPGSEEERILFAAIKAKLAEDSTWYSRKSAQIIGVTEETTTGVHRLKEMSAKGTLMFRAINVNDSVTKSKFDNLYGCRESLVDGIKRATDVMIAGKVAVVCGYGDVGKGSAQALRALSAQVWVTEIDPINALQAAMEGFKVVTMEWAADKADIFVTTTGNRDVITFEHMKAMKDQAIVCNIGHFDNEIQVAKLEEHCQWEEIKPQVDHVIFPDGKRIILLAKGRLVNLGCGTGHPSFVMSNSFANQTIAQIELFTHPEGYDVGKVYVLPKHLDEKVARLHLKKVGAMLTELSDEQAAYIGVPKQGPYKPDTYRY</sequence>
<organism>
    <name type="scientific">Acidovorax ebreus (strain TPSY)</name>
    <name type="common">Diaphorobacter sp. (strain TPSY)</name>
    <dbReference type="NCBI Taxonomy" id="535289"/>
    <lineage>
        <taxon>Bacteria</taxon>
        <taxon>Pseudomonadati</taxon>
        <taxon>Pseudomonadota</taxon>
        <taxon>Betaproteobacteria</taxon>
        <taxon>Burkholderiales</taxon>
        <taxon>Comamonadaceae</taxon>
        <taxon>Diaphorobacter</taxon>
    </lineage>
</organism>
<gene>
    <name evidence="1" type="primary">ahcY</name>
    <name type="ordered locus">Dtpsy_0597</name>
</gene>
<dbReference type="EC" id="3.13.2.1" evidence="1"/>
<dbReference type="EMBL" id="CP001392">
    <property type="protein sequence ID" value="ACM32077.1"/>
    <property type="molecule type" value="Genomic_DNA"/>
</dbReference>
<dbReference type="RefSeq" id="WP_012655614.1">
    <property type="nucleotide sequence ID" value="NC_011992.1"/>
</dbReference>
<dbReference type="SMR" id="B9MD45"/>
<dbReference type="KEGG" id="dia:Dtpsy_0597"/>
<dbReference type="eggNOG" id="COG0499">
    <property type="taxonomic scope" value="Bacteria"/>
</dbReference>
<dbReference type="HOGENOM" id="CLU_025194_2_1_4"/>
<dbReference type="UniPathway" id="UPA00314">
    <property type="reaction ID" value="UER00076"/>
</dbReference>
<dbReference type="Proteomes" id="UP000000450">
    <property type="component" value="Chromosome"/>
</dbReference>
<dbReference type="GO" id="GO:0005829">
    <property type="term" value="C:cytosol"/>
    <property type="evidence" value="ECO:0007669"/>
    <property type="project" value="TreeGrafter"/>
</dbReference>
<dbReference type="GO" id="GO:0004013">
    <property type="term" value="F:adenosylhomocysteinase activity"/>
    <property type="evidence" value="ECO:0007669"/>
    <property type="project" value="UniProtKB-UniRule"/>
</dbReference>
<dbReference type="GO" id="GO:0071269">
    <property type="term" value="P:L-homocysteine biosynthetic process"/>
    <property type="evidence" value="ECO:0007669"/>
    <property type="project" value="UniProtKB-UniRule"/>
</dbReference>
<dbReference type="GO" id="GO:0006730">
    <property type="term" value="P:one-carbon metabolic process"/>
    <property type="evidence" value="ECO:0007669"/>
    <property type="project" value="UniProtKB-KW"/>
</dbReference>
<dbReference type="GO" id="GO:0033353">
    <property type="term" value="P:S-adenosylmethionine cycle"/>
    <property type="evidence" value="ECO:0007669"/>
    <property type="project" value="TreeGrafter"/>
</dbReference>
<dbReference type="CDD" id="cd00401">
    <property type="entry name" value="SAHH"/>
    <property type="match status" value="1"/>
</dbReference>
<dbReference type="FunFam" id="3.40.50.720:FF:000004">
    <property type="entry name" value="Adenosylhomocysteinase"/>
    <property type="match status" value="1"/>
</dbReference>
<dbReference type="Gene3D" id="3.40.50.1480">
    <property type="entry name" value="Adenosylhomocysteinase-like"/>
    <property type="match status" value="1"/>
</dbReference>
<dbReference type="Gene3D" id="3.40.50.720">
    <property type="entry name" value="NAD(P)-binding Rossmann-like Domain"/>
    <property type="match status" value="1"/>
</dbReference>
<dbReference type="HAMAP" id="MF_00563">
    <property type="entry name" value="AdoHcyase"/>
    <property type="match status" value="1"/>
</dbReference>
<dbReference type="InterPro" id="IPR042172">
    <property type="entry name" value="Adenosylhomocyst_ase-like_sf"/>
</dbReference>
<dbReference type="InterPro" id="IPR000043">
    <property type="entry name" value="Adenosylhomocysteinase-like"/>
</dbReference>
<dbReference type="InterPro" id="IPR015878">
    <property type="entry name" value="Ado_hCys_hydrolase_NAD-bd"/>
</dbReference>
<dbReference type="InterPro" id="IPR036291">
    <property type="entry name" value="NAD(P)-bd_dom_sf"/>
</dbReference>
<dbReference type="InterPro" id="IPR020082">
    <property type="entry name" value="S-Ado-L-homoCys_hydrolase_CS"/>
</dbReference>
<dbReference type="NCBIfam" id="TIGR00936">
    <property type="entry name" value="ahcY"/>
    <property type="match status" value="1"/>
</dbReference>
<dbReference type="NCBIfam" id="NF004005">
    <property type="entry name" value="PRK05476.2-3"/>
    <property type="match status" value="1"/>
</dbReference>
<dbReference type="PANTHER" id="PTHR23420">
    <property type="entry name" value="ADENOSYLHOMOCYSTEINASE"/>
    <property type="match status" value="1"/>
</dbReference>
<dbReference type="PANTHER" id="PTHR23420:SF0">
    <property type="entry name" value="ADENOSYLHOMOCYSTEINASE"/>
    <property type="match status" value="1"/>
</dbReference>
<dbReference type="Pfam" id="PF05221">
    <property type="entry name" value="AdoHcyase"/>
    <property type="match status" value="1"/>
</dbReference>
<dbReference type="Pfam" id="PF00670">
    <property type="entry name" value="AdoHcyase_NAD"/>
    <property type="match status" value="1"/>
</dbReference>
<dbReference type="PIRSF" id="PIRSF001109">
    <property type="entry name" value="Ad_hcy_hydrolase"/>
    <property type="match status" value="1"/>
</dbReference>
<dbReference type="SMART" id="SM00996">
    <property type="entry name" value="AdoHcyase"/>
    <property type="match status" value="1"/>
</dbReference>
<dbReference type="SMART" id="SM00997">
    <property type="entry name" value="AdoHcyase_NAD"/>
    <property type="match status" value="1"/>
</dbReference>
<dbReference type="SUPFAM" id="SSF52283">
    <property type="entry name" value="Formate/glycerate dehydrogenase catalytic domain-like"/>
    <property type="match status" value="1"/>
</dbReference>
<dbReference type="SUPFAM" id="SSF51735">
    <property type="entry name" value="NAD(P)-binding Rossmann-fold domains"/>
    <property type="match status" value="1"/>
</dbReference>
<dbReference type="PROSITE" id="PS00738">
    <property type="entry name" value="ADOHCYASE_1"/>
    <property type="match status" value="1"/>
</dbReference>
<dbReference type="PROSITE" id="PS00739">
    <property type="entry name" value="ADOHCYASE_2"/>
    <property type="match status" value="1"/>
</dbReference>